<protein>
    <recommendedName>
        <fullName evidence="1">Fluoride-specific ion channel FluC</fullName>
    </recommendedName>
</protein>
<sequence length="109" mass="12937">MKINNFIYIFLAAYLATFFRLTLNNNFFISIIGSFLVGFFVSKRLSYSNEKILFSGFFSCFTSFSGFIYFLYKILNQGDWIKFIIFFNLIIILNLLTMIFGFWISRKIT</sequence>
<keyword id="KW-0997">Cell inner membrane</keyword>
<keyword id="KW-1003">Cell membrane</keyword>
<keyword id="KW-0407">Ion channel</keyword>
<keyword id="KW-0406">Ion transport</keyword>
<keyword id="KW-0472">Membrane</keyword>
<keyword id="KW-1185">Reference proteome</keyword>
<keyword id="KW-0812">Transmembrane</keyword>
<keyword id="KW-1133">Transmembrane helix</keyword>
<keyword id="KW-0813">Transport</keyword>
<feature type="chain" id="PRO_1000026406" description="Fluoride-specific ion channel FluC">
    <location>
        <begin position="1"/>
        <end position="109"/>
    </location>
</feature>
<feature type="transmembrane region" description="Helical" evidence="2">
    <location>
        <begin position="21"/>
        <end position="41"/>
    </location>
</feature>
<feature type="transmembrane region" description="Helical" evidence="2">
    <location>
        <begin position="52"/>
        <end position="72"/>
    </location>
</feature>
<feature type="transmembrane region" description="Helical" evidence="2">
    <location>
        <begin position="84"/>
        <end position="104"/>
    </location>
</feature>
<proteinExistence type="inferred from homology"/>
<comment type="function">
    <text evidence="1">Fluoride-specific ion channel. Important for reducing fluoride concentration in the cell, thus reducing its toxicity.</text>
</comment>
<comment type="catalytic activity">
    <reaction evidence="1">
        <text>fluoride(in) = fluoride(out)</text>
        <dbReference type="Rhea" id="RHEA:76159"/>
        <dbReference type="ChEBI" id="CHEBI:17051"/>
    </reaction>
    <physiologicalReaction direction="left-to-right" evidence="1">
        <dbReference type="Rhea" id="RHEA:76160"/>
    </physiologicalReaction>
</comment>
<comment type="subcellular location">
    <subcellularLocation>
        <location evidence="1">Cell inner membrane</location>
        <topology evidence="2">Multi-pass membrane protein</topology>
    </subcellularLocation>
</comment>
<comment type="similarity">
    <text evidence="3">Belongs to the fluoride channel Fluc/FEX (TC 1.A.43) family.</text>
</comment>
<gene>
    <name evidence="1" type="primary">fluC</name>
    <name type="synonym">crcB</name>
    <name type="ordered locus">P9301_18231</name>
</gene>
<name>FLUC_PROM0</name>
<evidence type="ECO:0000250" key="1">
    <source>
        <dbReference type="UniProtKB" id="P37002"/>
    </source>
</evidence>
<evidence type="ECO:0000255" key="2"/>
<evidence type="ECO:0000305" key="3"/>
<reference key="1">
    <citation type="journal article" date="2007" name="PLoS Genet.">
        <title>Patterns and implications of gene gain and loss in the evolution of Prochlorococcus.</title>
        <authorList>
            <person name="Kettler G.C."/>
            <person name="Martiny A.C."/>
            <person name="Huang K."/>
            <person name="Zucker J."/>
            <person name="Coleman M.L."/>
            <person name="Rodrigue S."/>
            <person name="Chen F."/>
            <person name="Lapidus A."/>
            <person name="Ferriera S."/>
            <person name="Johnson J."/>
            <person name="Steglich C."/>
            <person name="Church G.M."/>
            <person name="Richardson P."/>
            <person name="Chisholm S.W."/>
        </authorList>
    </citation>
    <scope>NUCLEOTIDE SEQUENCE [LARGE SCALE GENOMIC DNA]</scope>
    <source>
        <strain>MIT 9301</strain>
    </source>
</reference>
<dbReference type="EMBL" id="CP000576">
    <property type="protein sequence ID" value="ABO18446.1"/>
    <property type="molecule type" value="Genomic_DNA"/>
</dbReference>
<dbReference type="RefSeq" id="WP_011863731.1">
    <property type="nucleotide sequence ID" value="NC_009091.1"/>
</dbReference>
<dbReference type="SMR" id="A3PFC1"/>
<dbReference type="STRING" id="167546.P9301_18231"/>
<dbReference type="KEGG" id="pmg:P9301_18231"/>
<dbReference type="HOGENOM" id="CLU_2181556_0_0_3"/>
<dbReference type="Proteomes" id="UP000001430">
    <property type="component" value="Chromosome"/>
</dbReference>
<dbReference type="GO" id="GO:0005886">
    <property type="term" value="C:plasma membrane"/>
    <property type="evidence" value="ECO:0007669"/>
    <property type="project" value="UniProtKB-SubCell"/>
</dbReference>
<dbReference type="GO" id="GO:0034220">
    <property type="term" value="P:monoatomic ion transmembrane transport"/>
    <property type="evidence" value="ECO:0007669"/>
    <property type="project" value="UniProtKB-KW"/>
</dbReference>
<dbReference type="InterPro" id="IPR003691">
    <property type="entry name" value="FluC"/>
</dbReference>
<dbReference type="Pfam" id="PF02537">
    <property type="entry name" value="CRCB"/>
    <property type="match status" value="1"/>
</dbReference>
<accession>A3PFC1</accession>
<organism>
    <name type="scientific">Prochlorococcus marinus (strain MIT 9301)</name>
    <dbReference type="NCBI Taxonomy" id="167546"/>
    <lineage>
        <taxon>Bacteria</taxon>
        <taxon>Bacillati</taxon>
        <taxon>Cyanobacteriota</taxon>
        <taxon>Cyanophyceae</taxon>
        <taxon>Synechococcales</taxon>
        <taxon>Prochlorococcaceae</taxon>
        <taxon>Prochlorococcus</taxon>
    </lineage>
</organism>